<comment type="subunit">
    <text evidence="1">The basal body constitutes a major portion of the flagellar organelle and consists of four rings (L,P,S, and M) mounted on a central rod. The rod consists of about 26 subunits of FlgG in the distal portion, and FlgB, FlgC and FlgF are thought to build up the proximal portion of the rod with about 6 subunits each (By similarity).</text>
</comment>
<comment type="subcellular location">
    <subcellularLocation>
        <location evidence="1">Bacterial flagellum basal body</location>
    </subcellularLocation>
</comment>
<comment type="similarity">
    <text evidence="2">Belongs to the flagella basal body rod proteins family.</text>
</comment>
<organism>
    <name type="scientific">Borrelia hermsii</name>
    <dbReference type="NCBI Taxonomy" id="140"/>
    <lineage>
        <taxon>Bacteria</taxon>
        <taxon>Pseudomonadati</taxon>
        <taxon>Spirochaetota</taxon>
        <taxon>Spirochaetia</taxon>
        <taxon>Spirochaetales</taxon>
        <taxon>Borreliaceae</taxon>
        <taxon>Borrelia</taxon>
    </lineage>
</organism>
<keyword id="KW-0975">Bacterial flagellum</keyword>
<accession>P70911</accession>
<gene>
    <name type="primary">flgC</name>
</gene>
<name>FLGC_BORHE</name>
<dbReference type="EMBL" id="U71301">
    <property type="protein sequence ID" value="AAB51474.1"/>
    <property type="molecule type" value="Genomic_DNA"/>
</dbReference>
<dbReference type="SMR" id="P70911"/>
<dbReference type="STRING" id="140.A0V01_02870"/>
<dbReference type="eggNOG" id="COG1558">
    <property type="taxonomic scope" value="Bacteria"/>
</dbReference>
<dbReference type="GO" id="GO:0009425">
    <property type="term" value="C:bacterial-type flagellum basal body"/>
    <property type="evidence" value="ECO:0007669"/>
    <property type="project" value="UniProtKB-SubCell"/>
</dbReference>
<dbReference type="InterPro" id="IPR001444">
    <property type="entry name" value="Flag_bb_rod_N"/>
</dbReference>
<dbReference type="InterPro" id="IPR019776">
    <property type="entry name" value="Flagellar_basal_body_rod_CS"/>
</dbReference>
<dbReference type="Pfam" id="PF00460">
    <property type="entry name" value="Flg_bb_rod"/>
    <property type="match status" value="1"/>
</dbReference>
<dbReference type="PROSITE" id="PS00588">
    <property type="entry name" value="FLAGELLA_BB_ROD"/>
    <property type="match status" value="1"/>
</dbReference>
<protein>
    <recommendedName>
        <fullName>Flagellar basal-body rod protein FlgC</fullName>
    </recommendedName>
</protein>
<reference key="1">
    <citation type="submission" date="1996-10" db="EMBL/GenBank/DDBJ databases">
        <authorList>
            <person name="Ge Y."/>
            <person name="Old I.G."/>
            <person name="Saint-Girons I."/>
            <person name="Charon N.W."/>
        </authorList>
    </citation>
    <scope>NUCLEOTIDE SEQUENCE [GENOMIC DNA]</scope>
    <source>
        <strain>SH1</strain>
    </source>
</reference>
<proteinExistence type="inferred from homology"/>
<feature type="chain" id="PRO_0000180799" description="Flagellar basal-body rod protein FlgC">
    <location>
        <begin position="1"/>
        <end position="59" status="greater than"/>
    </location>
</feature>
<feature type="non-terminal residue">
    <location>
        <position position="59"/>
    </location>
</feature>
<sequence length="59" mass="6571">MGLFSSINTASTGLTAQRLRLDVIANNIANVETTRTSEGGSYRRQRVIFAPRVVSPYWK</sequence>
<evidence type="ECO:0000250" key="1"/>
<evidence type="ECO:0000305" key="2"/>